<accession>Q4QL88</accession>
<evidence type="ECO:0000255" key="1">
    <source>
        <dbReference type="HAMAP-Rule" id="MF_00252"/>
    </source>
</evidence>
<comment type="catalytic activity">
    <reaction evidence="1">
        <text>tRNA(Lys) + L-lysine + ATP = L-lysyl-tRNA(Lys) + AMP + diphosphate</text>
        <dbReference type="Rhea" id="RHEA:20792"/>
        <dbReference type="Rhea" id="RHEA-COMP:9696"/>
        <dbReference type="Rhea" id="RHEA-COMP:9697"/>
        <dbReference type="ChEBI" id="CHEBI:30616"/>
        <dbReference type="ChEBI" id="CHEBI:32551"/>
        <dbReference type="ChEBI" id="CHEBI:33019"/>
        <dbReference type="ChEBI" id="CHEBI:78442"/>
        <dbReference type="ChEBI" id="CHEBI:78529"/>
        <dbReference type="ChEBI" id="CHEBI:456215"/>
        <dbReference type="EC" id="6.1.1.6"/>
    </reaction>
</comment>
<comment type="cofactor">
    <cofactor evidence="1">
        <name>Mg(2+)</name>
        <dbReference type="ChEBI" id="CHEBI:18420"/>
    </cofactor>
    <text evidence="1">Binds 3 Mg(2+) ions per subunit.</text>
</comment>
<comment type="subunit">
    <text evidence="1">Homodimer.</text>
</comment>
<comment type="subcellular location">
    <subcellularLocation>
        <location evidence="1">Cytoplasm</location>
    </subcellularLocation>
</comment>
<comment type="similarity">
    <text evidence="1">Belongs to the class-II aminoacyl-tRNA synthetase family.</text>
</comment>
<dbReference type="EC" id="6.1.1.6" evidence="1"/>
<dbReference type="EMBL" id="CP000057">
    <property type="protein sequence ID" value="AAX88209.1"/>
    <property type="molecule type" value="Genomic_DNA"/>
</dbReference>
<dbReference type="RefSeq" id="WP_011272443.1">
    <property type="nucleotide sequence ID" value="NC_007146.2"/>
</dbReference>
<dbReference type="SMR" id="Q4QL88"/>
<dbReference type="GeneID" id="93220214"/>
<dbReference type="KEGG" id="hit:NTHI1382"/>
<dbReference type="HOGENOM" id="CLU_008255_6_0_6"/>
<dbReference type="Proteomes" id="UP000002525">
    <property type="component" value="Chromosome"/>
</dbReference>
<dbReference type="GO" id="GO:0005829">
    <property type="term" value="C:cytosol"/>
    <property type="evidence" value="ECO:0007669"/>
    <property type="project" value="TreeGrafter"/>
</dbReference>
<dbReference type="GO" id="GO:0005524">
    <property type="term" value="F:ATP binding"/>
    <property type="evidence" value="ECO:0007669"/>
    <property type="project" value="UniProtKB-UniRule"/>
</dbReference>
<dbReference type="GO" id="GO:0004824">
    <property type="term" value="F:lysine-tRNA ligase activity"/>
    <property type="evidence" value="ECO:0007669"/>
    <property type="project" value="UniProtKB-UniRule"/>
</dbReference>
<dbReference type="GO" id="GO:0000287">
    <property type="term" value="F:magnesium ion binding"/>
    <property type="evidence" value="ECO:0007669"/>
    <property type="project" value="UniProtKB-UniRule"/>
</dbReference>
<dbReference type="GO" id="GO:0000049">
    <property type="term" value="F:tRNA binding"/>
    <property type="evidence" value="ECO:0007669"/>
    <property type="project" value="TreeGrafter"/>
</dbReference>
<dbReference type="GO" id="GO:0006430">
    <property type="term" value="P:lysyl-tRNA aminoacylation"/>
    <property type="evidence" value="ECO:0007669"/>
    <property type="project" value="UniProtKB-UniRule"/>
</dbReference>
<dbReference type="CDD" id="cd00775">
    <property type="entry name" value="LysRS_core"/>
    <property type="match status" value="1"/>
</dbReference>
<dbReference type="CDD" id="cd04322">
    <property type="entry name" value="LysRS_N"/>
    <property type="match status" value="1"/>
</dbReference>
<dbReference type="FunFam" id="2.40.50.140:FF:000024">
    <property type="entry name" value="Lysine--tRNA ligase"/>
    <property type="match status" value="1"/>
</dbReference>
<dbReference type="FunFam" id="3.30.930.10:FF:000001">
    <property type="entry name" value="Lysine--tRNA ligase"/>
    <property type="match status" value="1"/>
</dbReference>
<dbReference type="Gene3D" id="3.30.930.10">
    <property type="entry name" value="Bira Bifunctional Protein, Domain 2"/>
    <property type="match status" value="1"/>
</dbReference>
<dbReference type="Gene3D" id="2.40.50.140">
    <property type="entry name" value="Nucleic acid-binding proteins"/>
    <property type="match status" value="1"/>
</dbReference>
<dbReference type="HAMAP" id="MF_00252">
    <property type="entry name" value="Lys_tRNA_synth_class2"/>
    <property type="match status" value="1"/>
</dbReference>
<dbReference type="InterPro" id="IPR004364">
    <property type="entry name" value="Aa-tRNA-synt_II"/>
</dbReference>
<dbReference type="InterPro" id="IPR006195">
    <property type="entry name" value="aa-tRNA-synth_II"/>
</dbReference>
<dbReference type="InterPro" id="IPR045864">
    <property type="entry name" value="aa-tRNA-synth_II/BPL/LPL"/>
</dbReference>
<dbReference type="InterPro" id="IPR002313">
    <property type="entry name" value="Lys-tRNA-ligase_II"/>
</dbReference>
<dbReference type="InterPro" id="IPR034762">
    <property type="entry name" value="Lys-tRNA-ligase_II_bac/euk"/>
</dbReference>
<dbReference type="InterPro" id="IPR044136">
    <property type="entry name" value="Lys-tRNA-ligase_II_N"/>
</dbReference>
<dbReference type="InterPro" id="IPR018149">
    <property type="entry name" value="Lys-tRNA-synth_II_C"/>
</dbReference>
<dbReference type="InterPro" id="IPR012340">
    <property type="entry name" value="NA-bd_OB-fold"/>
</dbReference>
<dbReference type="InterPro" id="IPR004365">
    <property type="entry name" value="NA-bd_OB_tRNA"/>
</dbReference>
<dbReference type="NCBIfam" id="TIGR00499">
    <property type="entry name" value="lysS_bact"/>
    <property type="match status" value="1"/>
</dbReference>
<dbReference type="NCBIfam" id="NF001756">
    <property type="entry name" value="PRK00484.1"/>
    <property type="match status" value="1"/>
</dbReference>
<dbReference type="PANTHER" id="PTHR42918:SF15">
    <property type="entry name" value="LYSINE--TRNA LIGASE, CHLOROPLASTIC_MITOCHONDRIAL"/>
    <property type="match status" value="1"/>
</dbReference>
<dbReference type="PANTHER" id="PTHR42918">
    <property type="entry name" value="LYSYL-TRNA SYNTHETASE"/>
    <property type="match status" value="1"/>
</dbReference>
<dbReference type="Pfam" id="PF00152">
    <property type="entry name" value="tRNA-synt_2"/>
    <property type="match status" value="1"/>
</dbReference>
<dbReference type="Pfam" id="PF01336">
    <property type="entry name" value="tRNA_anti-codon"/>
    <property type="match status" value="1"/>
</dbReference>
<dbReference type="PIRSF" id="PIRSF039101">
    <property type="entry name" value="LysRS2"/>
    <property type="match status" value="1"/>
</dbReference>
<dbReference type="PRINTS" id="PR00982">
    <property type="entry name" value="TRNASYNTHLYS"/>
</dbReference>
<dbReference type="SUPFAM" id="SSF55681">
    <property type="entry name" value="Class II aaRS and biotin synthetases"/>
    <property type="match status" value="1"/>
</dbReference>
<dbReference type="SUPFAM" id="SSF50249">
    <property type="entry name" value="Nucleic acid-binding proteins"/>
    <property type="match status" value="1"/>
</dbReference>
<dbReference type="PROSITE" id="PS50862">
    <property type="entry name" value="AA_TRNA_LIGASE_II"/>
    <property type="match status" value="1"/>
</dbReference>
<sequence length="502" mass="57115">MSEQEVKELDLNGEMLVRREKLAALRAKGNAFPNKFRRDALAQDLHNQYDSEDGEILKEKSIEVQVAGRIMTRRAMGKATFITIQDMSSKIQLYVARDNLPEGVYKDDVGTWDLGDIVGVKGTLFKTKTDELTVKTTEVQLLTKALRPLPDKFHGLTDQEVRYRQRYLDLISNEESRRTFIIRSKVVAGIREYFISKGFMEVETPMLQVIPGGASARPFVTHHNALDVDMYLRIAPELYLKRLVVGGFERVFELNRNFRNEGVSVRHNPEFTMLEYYQAYADYHDLMDNTEELLRKLAIDILGTTIVKYGEYEFDFGKPFERITLHDATVKYGADKGIVKEDLYDFDRAKATAERLGIEVQKSWGLGSIVNAIFEEVAEHHLIQPTFLMAHPAEISPLARRNDENPDVTDRFELFIGGREIGNGFSELNDAEDQNERFDAQVAAKEAGDDEAMFKDEDFVVALEHGLPPTAGEGLGIDRLAMLYANAPSIRDVILFPAMRQK</sequence>
<organism>
    <name type="scientific">Haemophilus influenzae (strain 86-028NP)</name>
    <dbReference type="NCBI Taxonomy" id="281310"/>
    <lineage>
        <taxon>Bacteria</taxon>
        <taxon>Pseudomonadati</taxon>
        <taxon>Pseudomonadota</taxon>
        <taxon>Gammaproteobacteria</taxon>
        <taxon>Pasteurellales</taxon>
        <taxon>Pasteurellaceae</taxon>
        <taxon>Haemophilus</taxon>
    </lineage>
</organism>
<keyword id="KW-0030">Aminoacyl-tRNA synthetase</keyword>
<keyword id="KW-0067">ATP-binding</keyword>
<keyword id="KW-0963">Cytoplasm</keyword>
<keyword id="KW-0436">Ligase</keyword>
<keyword id="KW-0460">Magnesium</keyword>
<keyword id="KW-0479">Metal-binding</keyword>
<keyword id="KW-0547">Nucleotide-binding</keyword>
<keyword id="KW-0648">Protein biosynthesis</keyword>
<feature type="chain" id="PRO_1000101117" description="Lysine--tRNA ligase">
    <location>
        <begin position="1"/>
        <end position="502"/>
    </location>
</feature>
<feature type="binding site" evidence="1">
    <location>
        <position position="413"/>
    </location>
    <ligand>
        <name>Mg(2+)</name>
        <dbReference type="ChEBI" id="CHEBI:18420"/>
        <label>1</label>
    </ligand>
</feature>
<feature type="binding site" evidence="1">
    <location>
        <position position="420"/>
    </location>
    <ligand>
        <name>Mg(2+)</name>
        <dbReference type="ChEBI" id="CHEBI:18420"/>
        <label>1</label>
    </ligand>
</feature>
<feature type="binding site" evidence="1">
    <location>
        <position position="420"/>
    </location>
    <ligand>
        <name>Mg(2+)</name>
        <dbReference type="ChEBI" id="CHEBI:18420"/>
        <label>2</label>
    </ligand>
</feature>
<proteinExistence type="inferred from homology"/>
<gene>
    <name evidence="1" type="primary">lysS</name>
    <name type="ordered locus">NTHI1382</name>
</gene>
<reference key="1">
    <citation type="journal article" date="2005" name="J. Bacteriol.">
        <title>Genomic sequence of an otitis media isolate of nontypeable Haemophilus influenzae: comparative study with H. influenzae serotype d, strain KW20.</title>
        <authorList>
            <person name="Harrison A."/>
            <person name="Dyer D.W."/>
            <person name="Gillaspy A."/>
            <person name="Ray W.C."/>
            <person name="Mungur R."/>
            <person name="Carson M.B."/>
            <person name="Zhong H."/>
            <person name="Gipson J."/>
            <person name="Gipson M."/>
            <person name="Johnson L.S."/>
            <person name="Lewis L."/>
            <person name="Bakaletz L.O."/>
            <person name="Munson R.S. Jr."/>
        </authorList>
    </citation>
    <scope>NUCLEOTIDE SEQUENCE [LARGE SCALE GENOMIC DNA]</scope>
    <source>
        <strain>86-028NP</strain>
    </source>
</reference>
<name>SYK_HAEI8</name>
<protein>
    <recommendedName>
        <fullName evidence="1">Lysine--tRNA ligase</fullName>
        <ecNumber evidence="1">6.1.1.6</ecNumber>
    </recommendedName>
    <alternativeName>
        <fullName evidence="1">Lysyl-tRNA synthetase</fullName>
        <shortName evidence="1">LysRS</shortName>
    </alternativeName>
</protein>